<reference key="1">
    <citation type="journal article" date="2005" name="PLoS Biol.">
        <title>The genome sequence of Rickettsia felis identifies the first putative conjugative plasmid in an obligate intracellular parasite.</title>
        <authorList>
            <person name="Ogata H."/>
            <person name="Renesto P."/>
            <person name="Audic S."/>
            <person name="Robert C."/>
            <person name="Blanc G."/>
            <person name="Fournier P.-E."/>
            <person name="Parinello H."/>
            <person name="Claverie J.-M."/>
            <person name="Raoult D."/>
        </authorList>
    </citation>
    <scope>NUCLEOTIDE SEQUENCE [LARGE SCALE GENOMIC DNA]</scope>
    <source>
        <strain>ATCC VR-1525 / URRWXCal2</strain>
    </source>
</reference>
<keyword id="KW-0997">Cell inner membrane</keyword>
<keyword id="KW-1003">Cell membrane</keyword>
<keyword id="KW-0472">Membrane</keyword>
<keyword id="KW-0812">Transmembrane</keyword>
<keyword id="KW-1133">Transmembrane helix</keyword>
<keyword id="KW-0813">Transport</keyword>
<gene>
    <name type="ordered locus">RF_0358</name>
</gene>
<organism>
    <name type="scientific">Rickettsia felis (strain ATCC VR-1525 / URRWXCal2)</name>
    <name type="common">Rickettsia azadi</name>
    <dbReference type="NCBI Taxonomy" id="315456"/>
    <lineage>
        <taxon>Bacteria</taxon>
        <taxon>Pseudomonadati</taxon>
        <taxon>Pseudomonadota</taxon>
        <taxon>Alphaproteobacteria</taxon>
        <taxon>Rickettsiales</taxon>
        <taxon>Rickettsiaceae</taxon>
        <taxon>Rickettsieae</taxon>
        <taxon>Rickettsia</taxon>
        <taxon>spotted fever group</taxon>
    </lineage>
</organism>
<protein>
    <recommendedName>
        <fullName>Uncharacterized transporter RF_0358</fullName>
    </recommendedName>
</protein>
<name>BCRH_RICFE</name>
<proteinExistence type="inferred from homology"/>
<accession>Q4UMJ9</accession>
<feature type="chain" id="PRO_0000281082" description="Uncharacterized transporter RF_0358">
    <location>
        <begin position="1"/>
        <end position="405"/>
    </location>
</feature>
<feature type="transmembrane region" description="Helical" evidence="1">
    <location>
        <begin position="3"/>
        <end position="23"/>
    </location>
</feature>
<feature type="transmembrane region" description="Helical" evidence="1">
    <location>
        <begin position="42"/>
        <end position="62"/>
    </location>
</feature>
<feature type="transmembrane region" description="Helical" evidence="1">
    <location>
        <begin position="73"/>
        <end position="93"/>
    </location>
</feature>
<feature type="transmembrane region" description="Helical" evidence="1">
    <location>
        <begin position="95"/>
        <end position="115"/>
    </location>
</feature>
<feature type="transmembrane region" description="Helical" evidence="1">
    <location>
        <begin position="135"/>
        <end position="155"/>
    </location>
</feature>
<feature type="transmembrane region" description="Helical" evidence="1">
    <location>
        <begin position="162"/>
        <end position="182"/>
    </location>
</feature>
<feature type="transmembrane region" description="Helical" evidence="1">
    <location>
        <begin position="209"/>
        <end position="229"/>
    </location>
</feature>
<feature type="transmembrane region" description="Helical" evidence="1">
    <location>
        <begin position="248"/>
        <end position="268"/>
    </location>
</feature>
<feature type="transmembrane region" description="Helical" evidence="1">
    <location>
        <begin position="280"/>
        <end position="300"/>
    </location>
</feature>
<feature type="transmembrane region" description="Helical" evidence="1">
    <location>
        <begin position="309"/>
        <end position="329"/>
    </location>
</feature>
<feature type="transmembrane region" description="Helical" evidence="1">
    <location>
        <begin position="346"/>
        <end position="366"/>
    </location>
</feature>
<feature type="transmembrane region" description="Helical" evidence="1">
    <location>
        <begin position="377"/>
        <end position="397"/>
    </location>
</feature>
<dbReference type="EMBL" id="CP000053">
    <property type="protein sequence ID" value="AAY61209.1"/>
    <property type="molecule type" value="Genomic_DNA"/>
</dbReference>
<dbReference type="SMR" id="Q4UMJ9"/>
<dbReference type="STRING" id="315456.RF_0358"/>
<dbReference type="KEGG" id="rfe:RF_0358"/>
<dbReference type="eggNOG" id="COG2814">
    <property type="taxonomic scope" value="Bacteria"/>
</dbReference>
<dbReference type="HOGENOM" id="CLU_001265_47_1_5"/>
<dbReference type="OrthoDB" id="9800416at2"/>
<dbReference type="Proteomes" id="UP000008548">
    <property type="component" value="Chromosome"/>
</dbReference>
<dbReference type="GO" id="GO:0005886">
    <property type="term" value="C:plasma membrane"/>
    <property type="evidence" value="ECO:0007669"/>
    <property type="project" value="UniProtKB-SubCell"/>
</dbReference>
<dbReference type="GO" id="GO:0042910">
    <property type="term" value="F:xenobiotic transmembrane transporter activity"/>
    <property type="evidence" value="ECO:0007669"/>
    <property type="project" value="InterPro"/>
</dbReference>
<dbReference type="GO" id="GO:1990961">
    <property type="term" value="P:xenobiotic detoxification by transmembrane export across the plasma membrane"/>
    <property type="evidence" value="ECO:0007669"/>
    <property type="project" value="InterPro"/>
</dbReference>
<dbReference type="CDD" id="cd17320">
    <property type="entry name" value="MFS_MdfA_MDR_like"/>
    <property type="match status" value="1"/>
</dbReference>
<dbReference type="Gene3D" id="1.20.1720.10">
    <property type="entry name" value="Multidrug resistance protein D"/>
    <property type="match status" value="1"/>
</dbReference>
<dbReference type="InterPro" id="IPR004812">
    <property type="entry name" value="Efflux_drug-R_Bcr/CmlA"/>
</dbReference>
<dbReference type="InterPro" id="IPR011701">
    <property type="entry name" value="MFS"/>
</dbReference>
<dbReference type="InterPro" id="IPR020846">
    <property type="entry name" value="MFS_dom"/>
</dbReference>
<dbReference type="InterPro" id="IPR036259">
    <property type="entry name" value="MFS_trans_sf"/>
</dbReference>
<dbReference type="InterPro" id="IPR005829">
    <property type="entry name" value="Sugar_transporter_CS"/>
</dbReference>
<dbReference type="NCBIfam" id="TIGR00710">
    <property type="entry name" value="efflux_Bcr_CflA"/>
    <property type="match status" value="1"/>
</dbReference>
<dbReference type="PANTHER" id="PTHR23502">
    <property type="entry name" value="MAJOR FACILITATOR SUPERFAMILY"/>
    <property type="match status" value="1"/>
</dbReference>
<dbReference type="PANTHER" id="PTHR23502:SF137">
    <property type="entry name" value="MAJOR FACILITATOR SUPERFAMILY (MFS) TRANSPORTER-RELATED"/>
    <property type="match status" value="1"/>
</dbReference>
<dbReference type="Pfam" id="PF07690">
    <property type="entry name" value="MFS_1"/>
    <property type="match status" value="1"/>
</dbReference>
<dbReference type="SUPFAM" id="SSF103473">
    <property type="entry name" value="MFS general substrate transporter"/>
    <property type="match status" value="1"/>
</dbReference>
<dbReference type="PROSITE" id="PS50850">
    <property type="entry name" value="MFS"/>
    <property type="match status" value="1"/>
</dbReference>
<dbReference type="PROSITE" id="PS00216">
    <property type="entry name" value="SUGAR_TRANSPORT_1"/>
    <property type="match status" value="1"/>
</dbReference>
<evidence type="ECO:0000255" key="1"/>
<evidence type="ECO:0000305" key="2"/>
<sequence length="405" mass="45037">MKIIAKIPAWMLLCLFILSPTTETIYTSGLPSLTKYFGIDGGITQTTSTLYFLGFALGILTLGRLSDIYGRRPIALLGLFIYVISSIISIFAVNIEMLMIARFVQAFGVSVGSVIGQAMARDSYQGSELSYVYASLSPWLLFIPSLGSSIGGYIIEYSSWHYVFVFFSLTGTILLALYYKVLPETNSYIDFSQSSKYFEVLQVIIKDKILWLYAFIIGAFNGIYYGFFIEAPFIFIDKMKVSSSFYGKLAFLLSFAAIFGGFLGGYLIKKRHVHDKKVMGLGFIFSLCGCILFAVNAFILEVVSASHSLAIAMIFVPMMIHMVGHNLLIPMTLRYALVDYAKVTGTAGSIFGAIYYVVIAAVTYLVSKIHSETISNFALLCFVLSISSAISFYCIWVLYKKKHKL</sequence>
<comment type="subcellular location">
    <subcellularLocation>
        <location evidence="2">Cell inner membrane</location>
        <topology evidence="2">Multi-pass membrane protein</topology>
    </subcellularLocation>
</comment>
<comment type="similarity">
    <text evidence="2">Belongs to the major facilitator superfamily. Bcr/CmlA family.</text>
</comment>